<reference key="1">
    <citation type="journal article" date="2003" name="Biochem. J.">
        <title>Sulphoacetaldehyde acetyltransferase yields acetyl phosphate: purification from Alcaligenes defragrans and gene clusters in taurine degradation.</title>
        <authorList>
            <person name="Ruff J."/>
            <person name="Denger K."/>
            <person name="Cook A.M."/>
        </authorList>
    </citation>
    <scope>NUCLEOTIDE SEQUENCE [GENOMIC DNA]</scope>
    <scope>PROTEIN SEQUENCE OF 2-21; 211-230 AND 303-314</scope>
    <scope>CATALYTIC ACTIVITY</scope>
    <scope>COFACTOR</scope>
    <scope>BIOPHYSICOCHEMICAL PROPERTIES</scope>
    <scope>PATHWAY</scope>
    <scope>SUBUNIT</scope>
    <scope>SUBCELLULAR LOCATION</scope>
    <source>
        <strain>DSM 11046 / CCUG 39541 / NKNTAU</strain>
    </source>
</reference>
<accession>Q84H44</accession>
<feature type="initiator methionine" description="Removed" evidence="1">
    <location>
        <position position="1"/>
    </location>
</feature>
<feature type="chain" id="PRO_0000090843" description="Sulfoacetaldehyde acetyltransferase">
    <location>
        <begin position="2"/>
        <end position="598"/>
    </location>
</feature>
<organism>
    <name type="scientific">Castellaniella defragrans</name>
    <name type="common">Alcaligenes defragrans</name>
    <dbReference type="NCBI Taxonomy" id="75697"/>
    <lineage>
        <taxon>Bacteria</taxon>
        <taxon>Pseudomonadati</taxon>
        <taxon>Pseudomonadota</taxon>
        <taxon>Betaproteobacteria</taxon>
        <taxon>Burkholderiales</taxon>
        <taxon>Alcaligenaceae</taxon>
        <taxon>Castellaniella</taxon>
    </lineage>
</organism>
<comment type="catalytic activity">
    <reaction evidence="1">
        <text>acetyl phosphate + sulfite + H(+) = sulfoacetaldehyde + phosphate</text>
        <dbReference type="Rhea" id="RHEA:24204"/>
        <dbReference type="ChEBI" id="CHEBI:15378"/>
        <dbReference type="ChEBI" id="CHEBI:17359"/>
        <dbReference type="ChEBI" id="CHEBI:22191"/>
        <dbReference type="ChEBI" id="CHEBI:43474"/>
        <dbReference type="ChEBI" id="CHEBI:58246"/>
        <dbReference type="EC" id="2.3.3.15"/>
    </reaction>
</comment>
<comment type="cofactor">
    <cofactor evidence="1">
        <name>Mg(2+)</name>
        <dbReference type="ChEBI" id="CHEBI:18420"/>
    </cofactor>
</comment>
<comment type="cofactor">
    <cofactor evidence="1">
        <name>thiamine diphosphate</name>
        <dbReference type="ChEBI" id="CHEBI:58937"/>
    </cofactor>
</comment>
<comment type="biophysicochemical properties">
    <kinetics>
        <KM evidence="1">2.1 mM for sulfoacetaldehyde</KM>
        <KM evidence="1">6.4 mM for phosphate</KM>
        <KM evidence="1">2.2 uM for thiamine pyrophosphate</KM>
    </kinetics>
    <temperatureDependence>
        <text evidence="1">Optimum temperature is 30 degrees Celsius.</text>
    </temperatureDependence>
</comment>
<comment type="pathway">
    <text evidence="1">Organosulfur degradation; taurine degradation via aerobic pathway; acetyl phosphate and sulfite from taurine: step 2/2.</text>
</comment>
<comment type="subunit">
    <text evidence="1">Homotetramer.</text>
</comment>
<comment type="subcellular location">
    <subcellularLocation>
        <location evidence="1">Cytoplasm</location>
    </subcellularLocation>
</comment>
<comment type="similarity">
    <text evidence="3">Belongs to the TPP enzyme family.</text>
</comment>
<evidence type="ECO:0000269" key="1">
    <source>
    </source>
</evidence>
<evidence type="ECO:0000303" key="2">
    <source>
    </source>
</evidence>
<evidence type="ECO:0000305" key="3"/>
<proteinExistence type="evidence at protein level"/>
<gene>
    <name evidence="2" type="primary">xsc</name>
</gene>
<protein>
    <recommendedName>
        <fullName evidence="2">Sulfoacetaldehyde acetyltransferase</fullName>
        <ecNumber evidence="1">2.3.3.15</ecNumber>
    </recommendedName>
</protein>
<sequence length="598" mass="65108">MANDTRQVVQGVQEMTPSEAFVETMVANGVTEIFGIMGSAFMDAMDIFAPAGIKLIPVVHEQGAAHMADGFARVSGRTGVVIGQNGPGISNCVTAIAAAYWAHTPVVIVTPEAGTTGIGLGGFQEARQLPMFQEFTKYQGHVTHPARMAEYTARCFARARDEMGPAQLNIPRDYFYGKIKCEIPLPQPLDRGPGGAQSLDAAARLLAEAKFPVIISGGGVVMGDAVEECKALAERLGAPVVNSYLHNDSFPASHPLWCGPLGYQGSKAAMKLLADADVVLALGTRLGPFGTLPQHGLDYWPKNARIIQVDADSKMLGLVKKITVGVCGDAKASAAEISRRIDGMKLACDANKAERAARIQAEKDAWEQELTDWTHERDPFSLDMIEEQSKEEGNWLHPRQVLRELEKAMPEDVMVSTDIGNINSVANSYLRFEKPRSFFAAMSWGNCGYAFPTIIGAKVAAPHRPAVSYAGDGAWGMSMSEIMTCVRHDIPVTAVVFHNRQWGAEKKNQVDFYNRRFVAGELESESFAGIARAMGAEGVVVDRIEDVGPALKKAIDAQMNDRKTTVIEIMCTRELGDPFRRDALSKPVRLLEKYRDYT</sequence>
<keyword id="KW-0012">Acyltransferase</keyword>
<keyword id="KW-0963">Cytoplasm</keyword>
<keyword id="KW-0903">Direct protein sequencing</keyword>
<keyword id="KW-0460">Magnesium</keyword>
<keyword id="KW-0479">Metal-binding</keyword>
<keyword id="KW-0786">Thiamine pyrophosphate</keyword>
<keyword id="KW-0808">Transferase</keyword>
<dbReference type="EC" id="2.3.3.15" evidence="1"/>
<dbReference type="EMBL" id="AY134843">
    <property type="protein sequence ID" value="AAN08489.1"/>
    <property type="molecule type" value="Genomic_DNA"/>
</dbReference>
<dbReference type="SMR" id="Q84H44"/>
<dbReference type="KEGG" id="ag:AAN08489"/>
<dbReference type="BioCyc" id="MetaCyc:MONOMER-3001"/>
<dbReference type="BRENDA" id="2.3.3.15">
    <property type="organism ID" value="229"/>
</dbReference>
<dbReference type="UniPathway" id="UPA00336">
    <property type="reaction ID" value="UER00544"/>
</dbReference>
<dbReference type="GO" id="GO:0005948">
    <property type="term" value="C:acetolactate synthase complex"/>
    <property type="evidence" value="ECO:0007669"/>
    <property type="project" value="TreeGrafter"/>
</dbReference>
<dbReference type="GO" id="GO:0003984">
    <property type="term" value="F:acetolactate synthase activity"/>
    <property type="evidence" value="ECO:0007669"/>
    <property type="project" value="TreeGrafter"/>
</dbReference>
<dbReference type="GO" id="GO:0050660">
    <property type="term" value="F:flavin adenine dinucleotide binding"/>
    <property type="evidence" value="ECO:0007669"/>
    <property type="project" value="TreeGrafter"/>
</dbReference>
<dbReference type="GO" id="GO:0000287">
    <property type="term" value="F:magnesium ion binding"/>
    <property type="evidence" value="ECO:0007669"/>
    <property type="project" value="InterPro"/>
</dbReference>
<dbReference type="GO" id="GO:0050487">
    <property type="term" value="F:sulfoacetaldehyde acetyltransferase activity"/>
    <property type="evidence" value="ECO:0007669"/>
    <property type="project" value="UniProtKB-EC"/>
</dbReference>
<dbReference type="GO" id="GO:0030976">
    <property type="term" value="F:thiamine pyrophosphate binding"/>
    <property type="evidence" value="ECO:0007669"/>
    <property type="project" value="InterPro"/>
</dbReference>
<dbReference type="GO" id="GO:0009097">
    <property type="term" value="P:isoleucine biosynthetic process"/>
    <property type="evidence" value="ECO:0007669"/>
    <property type="project" value="TreeGrafter"/>
</dbReference>
<dbReference type="GO" id="GO:0009099">
    <property type="term" value="P:L-valine biosynthetic process"/>
    <property type="evidence" value="ECO:0007669"/>
    <property type="project" value="TreeGrafter"/>
</dbReference>
<dbReference type="GO" id="GO:0019529">
    <property type="term" value="P:taurine catabolic process"/>
    <property type="evidence" value="ECO:0007669"/>
    <property type="project" value="InterPro"/>
</dbReference>
<dbReference type="CDD" id="cd07035">
    <property type="entry name" value="TPP_PYR_POX_like"/>
    <property type="match status" value="1"/>
</dbReference>
<dbReference type="CDD" id="cd02013">
    <property type="entry name" value="TPP_Xsc_like"/>
    <property type="match status" value="1"/>
</dbReference>
<dbReference type="Gene3D" id="3.40.50.970">
    <property type="match status" value="2"/>
</dbReference>
<dbReference type="Gene3D" id="3.40.50.1220">
    <property type="entry name" value="TPP-binding domain"/>
    <property type="match status" value="1"/>
</dbReference>
<dbReference type="InterPro" id="IPR029035">
    <property type="entry name" value="DHS-like_NAD/FAD-binding_dom"/>
</dbReference>
<dbReference type="InterPro" id="IPR017820">
    <property type="entry name" value="Sulphoacetald_Actrfrase"/>
</dbReference>
<dbReference type="InterPro" id="IPR029061">
    <property type="entry name" value="THDP-binding"/>
</dbReference>
<dbReference type="InterPro" id="IPR012000">
    <property type="entry name" value="Thiamin_PyroP_enz_cen_dom"/>
</dbReference>
<dbReference type="InterPro" id="IPR012001">
    <property type="entry name" value="Thiamin_PyroP_enz_TPP-bd_dom"/>
</dbReference>
<dbReference type="InterPro" id="IPR045229">
    <property type="entry name" value="TPP_enz"/>
</dbReference>
<dbReference type="InterPro" id="IPR011766">
    <property type="entry name" value="TPP_enzyme_TPP-bd"/>
</dbReference>
<dbReference type="NCBIfam" id="NF005713">
    <property type="entry name" value="PRK07525.1"/>
    <property type="match status" value="1"/>
</dbReference>
<dbReference type="NCBIfam" id="TIGR03457">
    <property type="entry name" value="sulphoacet_xsc"/>
    <property type="match status" value="1"/>
</dbReference>
<dbReference type="PANTHER" id="PTHR18968:SF13">
    <property type="entry name" value="ACETOLACTATE SYNTHASE CATALYTIC SUBUNIT, MITOCHONDRIAL"/>
    <property type="match status" value="1"/>
</dbReference>
<dbReference type="PANTHER" id="PTHR18968">
    <property type="entry name" value="THIAMINE PYROPHOSPHATE ENZYMES"/>
    <property type="match status" value="1"/>
</dbReference>
<dbReference type="Pfam" id="PF02775">
    <property type="entry name" value="TPP_enzyme_C"/>
    <property type="match status" value="1"/>
</dbReference>
<dbReference type="Pfam" id="PF00205">
    <property type="entry name" value="TPP_enzyme_M"/>
    <property type="match status" value="1"/>
</dbReference>
<dbReference type="Pfam" id="PF02776">
    <property type="entry name" value="TPP_enzyme_N"/>
    <property type="match status" value="1"/>
</dbReference>
<dbReference type="SUPFAM" id="SSF52467">
    <property type="entry name" value="DHS-like NAD/FAD-binding domain"/>
    <property type="match status" value="1"/>
</dbReference>
<dbReference type="SUPFAM" id="SSF52518">
    <property type="entry name" value="Thiamin diphosphate-binding fold (THDP-binding)"/>
    <property type="match status" value="2"/>
</dbReference>
<name>XSC_CASDE</name>